<feature type="initiator methionine" description="Removed" evidence="1">
    <location>
        <position position="1"/>
    </location>
</feature>
<feature type="chain" id="PRO_0000160032" description="Superoxide dismutase [Mn]">
    <location>
        <begin position="2"/>
        <end position="206"/>
    </location>
</feature>
<feature type="binding site" evidence="1">
    <location>
        <position position="27"/>
    </location>
    <ligand>
        <name>Mn(2+)</name>
        <dbReference type="ChEBI" id="CHEBI:29035"/>
    </ligand>
</feature>
<feature type="binding site" evidence="1">
    <location>
        <position position="82"/>
    </location>
    <ligand>
        <name>Mn(2+)</name>
        <dbReference type="ChEBI" id="CHEBI:29035"/>
    </ligand>
</feature>
<feature type="binding site" evidence="1">
    <location>
        <position position="168"/>
    </location>
    <ligand>
        <name>Mn(2+)</name>
        <dbReference type="ChEBI" id="CHEBI:29035"/>
    </ligand>
</feature>
<feature type="binding site" evidence="1">
    <location>
        <position position="172"/>
    </location>
    <ligand>
        <name>Mn(2+)</name>
        <dbReference type="ChEBI" id="CHEBI:29035"/>
    </ligand>
</feature>
<keyword id="KW-0464">Manganese</keyword>
<keyword id="KW-0479">Metal-binding</keyword>
<keyword id="KW-0560">Oxidoreductase</keyword>
<comment type="function">
    <text>Destroys superoxide anion radicals which are normally produced within the cells and which are toxic to biological systems.</text>
</comment>
<comment type="catalytic activity">
    <reaction>
        <text>2 superoxide + 2 H(+) = H2O2 + O2</text>
        <dbReference type="Rhea" id="RHEA:20696"/>
        <dbReference type="ChEBI" id="CHEBI:15378"/>
        <dbReference type="ChEBI" id="CHEBI:15379"/>
        <dbReference type="ChEBI" id="CHEBI:16240"/>
        <dbReference type="ChEBI" id="CHEBI:18421"/>
        <dbReference type="EC" id="1.15.1.1"/>
    </reaction>
</comment>
<comment type="cofactor">
    <cofactor evidence="1">
        <name>Mn(2+)</name>
        <dbReference type="ChEBI" id="CHEBI:29035"/>
    </cofactor>
    <text evidence="1">Binds 1 Mn(2+) ion per subunit.</text>
</comment>
<comment type="subunit">
    <text evidence="1">Homodimer.</text>
</comment>
<comment type="similarity">
    <text evidence="2">Belongs to the iron/manganese superoxide dismutase family.</text>
</comment>
<proteinExistence type="inferred from homology"/>
<organism>
    <name type="scientific">Salmonella typhi</name>
    <dbReference type="NCBI Taxonomy" id="90370"/>
    <lineage>
        <taxon>Bacteria</taxon>
        <taxon>Pseudomonadati</taxon>
        <taxon>Pseudomonadota</taxon>
        <taxon>Gammaproteobacteria</taxon>
        <taxon>Enterobacterales</taxon>
        <taxon>Enterobacteriaceae</taxon>
        <taxon>Salmonella</taxon>
    </lineage>
</organism>
<reference key="1">
    <citation type="journal article" date="2001" name="Nature">
        <title>Complete genome sequence of a multiple drug resistant Salmonella enterica serovar Typhi CT18.</title>
        <authorList>
            <person name="Parkhill J."/>
            <person name="Dougan G."/>
            <person name="James K.D."/>
            <person name="Thomson N.R."/>
            <person name="Pickard D."/>
            <person name="Wain J."/>
            <person name="Churcher C.M."/>
            <person name="Mungall K.L."/>
            <person name="Bentley S.D."/>
            <person name="Holden M.T.G."/>
            <person name="Sebaihia M."/>
            <person name="Baker S."/>
            <person name="Basham D."/>
            <person name="Brooks K."/>
            <person name="Chillingworth T."/>
            <person name="Connerton P."/>
            <person name="Cronin A."/>
            <person name="Davis P."/>
            <person name="Davies R.M."/>
            <person name="Dowd L."/>
            <person name="White N."/>
            <person name="Farrar J."/>
            <person name="Feltwell T."/>
            <person name="Hamlin N."/>
            <person name="Haque A."/>
            <person name="Hien T.T."/>
            <person name="Holroyd S."/>
            <person name="Jagels K."/>
            <person name="Krogh A."/>
            <person name="Larsen T.S."/>
            <person name="Leather S."/>
            <person name="Moule S."/>
            <person name="O'Gaora P."/>
            <person name="Parry C."/>
            <person name="Quail M.A."/>
            <person name="Rutherford K.M."/>
            <person name="Simmonds M."/>
            <person name="Skelton J."/>
            <person name="Stevens K."/>
            <person name="Whitehead S."/>
            <person name="Barrell B.G."/>
        </authorList>
    </citation>
    <scope>NUCLEOTIDE SEQUENCE [LARGE SCALE GENOMIC DNA]</scope>
    <source>
        <strain>CT18</strain>
    </source>
</reference>
<reference key="2">
    <citation type="journal article" date="2003" name="J. Bacteriol.">
        <title>Comparative genomics of Salmonella enterica serovar Typhi strains Ty2 and CT18.</title>
        <authorList>
            <person name="Deng W."/>
            <person name="Liou S.-R."/>
            <person name="Plunkett G. III"/>
            <person name="Mayhew G.F."/>
            <person name="Rose D.J."/>
            <person name="Burland V."/>
            <person name="Kodoyianni V."/>
            <person name="Schwartz D.C."/>
            <person name="Blattner F.R."/>
        </authorList>
    </citation>
    <scope>NUCLEOTIDE SEQUENCE [LARGE SCALE GENOMIC DNA]</scope>
    <source>
        <strain>ATCC 700931 / Ty2</strain>
    </source>
</reference>
<accession>Q8Z2V9</accession>
<gene>
    <name type="primary">sodA</name>
    <name type="ordered locus">STY3816</name>
    <name type="ordered locus">t3564</name>
</gene>
<sequence>MSYTLPSLPYAYDALEPHFDKQTMEIHHTKHHQTYVNNANAALENLPEFADLPVEELITKLDQVPADKKTVLRNNAGGHANHSLFWKGLKKGTTLQGDLKAAIERDFGSVDNFKAEFEKAAATRFGSGWAWLVLKGDKLAVVSTANQDSPLMGEAISGASGFPILGLDVWEHAYYLKFQNRRPDYIKEFWNVVNWDEAAARFAAKK</sequence>
<dbReference type="EC" id="1.15.1.1"/>
<dbReference type="EMBL" id="AL513382">
    <property type="protein sequence ID" value="CAD09569.1"/>
    <property type="molecule type" value="Genomic_DNA"/>
</dbReference>
<dbReference type="EMBL" id="AE014613">
    <property type="protein sequence ID" value="AAO71069.1"/>
    <property type="molecule type" value="Genomic_DNA"/>
</dbReference>
<dbReference type="RefSeq" id="NP_457996.1">
    <property type="nucleotide sequence ID" value="NC_003198.1"/>
</dbReference>
<dbReference type="RefSeq" id="WP_000122632.1">
    <property type="nucleotide sequence ID" value="NZ_WSUR01000010.1"/>
</dbReference>
<dbReference type="SMR" id="Q8Z2V9"/>
<dbReference type="STRING" id="220341.gene:17587680"/>
<dbReference type="KEGG" id="stt:t3564"/>
<dbReference type="KEGG" id="sty:STY3816"/>
<dbReference type="PATRIC" id="fig|220341.7.peg.3895"/>
<dbReference type="eggNOG" id="COG0605">
    <property type="taxonomic scope" value="Bacteria"/>
</dbReference>
<dbReference type="HOGENOM" id="CLU_031625_0_1_6"/>
<dbReference type="OMA" id="GSYEGWK"/>
<dbReference type="OrthoDB" id="9803125at2"/>
<dbReference type="Proteomes" id="UP000000541">
    <property type="component" value="Chromosome"/>
</dbReference>
<dbReference type="Proteomes" id="UP000002670">
    <property type="component" value="Chromosome"/>
</dbReference>
<dbReference type="GO" id="GO:0005737">
    <property type="term" value="C:cytoplasm"/>
    <property type="evidence" value="ECO:0007669"/>
    <property type="project" value="TreeGrafter"/>
</dbReference>
<dbReference type="GO" id="GO:0046872">
    <property type="term" value="F:metal ion binding"/>
    <property type="evidence" value="ECO:0007669"/>
    <property type="project" value="UniProtKB-KW"/>
</dbReference>
<dbReference type="GO" id="GO:0004784">
    <property type="term" value="F:superoxide dismutase activity"/>
    <property type="evidence" value="ECO:0007669"/>
    <property type="project" value="UniProtKB-EC"/>
</dbReference>
<dbReference type="FunFam" id="1.10.287.990:FF:000001">
    <property type="entry name" value="Superoxide dismutase"/>
    <property type="match status" value="1"/>
</dbReference>
<dbReference type="FunFam" id="3.55.40.20:FF:000001">
    <property type="entry name" value="Superoxide dismutase"/>
    <property type="match status" value="1"/>
</dbReference>
<dbReference type="Gene3D" id="1.10.287.990">
    <property type="entry name" value="Fe,Mn superoxide dismutase (SOD) domain"/>
    <property type="match status" value="1"/>
</dbReference>
<dbReference type="Gene3D" id="3.55.40.20">
    <property type="entry name" value="Iron/manganese superoxide dismutase, C-terminal domain"/>
    <property type="match status" value="1"/>
</dbReference>
<dbReference type="InterPro" id="IPR001189">
    <property type="entry name" value="Mn/Fe_SOD"/>
</dbReference>
<dbReference type="InterPro" id="IPR019833">
    <property type="entry name" value="Mn/Fe_SOD_BS"/>
</dbReference>
<dbReference type="InterPro" id="IPR019832">
    <property type="entry name" value="Mn/Fe_SOD_C"/>
</dbReference>
<dbReference type="InterPro" id="IPR019831">
    <property type="entry name" value="Mn/Fe_SOD_N"/>
</dbReference>
<dbReference type="InterPro" id="IPR036324">
    <property type="entry name" value="Mn/Fe_SOD_N_sf"/>
</dbReference>
<dbReference type="InterPro" id="IPR036314">
    <property type="entry name" value="SOD_C_sf"/>
</dbReference>
<dbReference type="NCBIfam" id="NF008177">
    <property type="entry name" value="PRK10925.1"/>
    <property type="match status" value="1"/>
</dbReference>
<dbReference type="PANTHER" id="PTHR43595">
    <property type="entry name" value="37S RIBOSOMAL PROTEIN S26, MITOCHONDRIAL"/>
    <property type="match status" value="1"/>
</dbReference>
<dbReference type="PANTHER" id="PTHR43595:SF2">
    <property type="entry name" value="SMALL RIBOSOMAL SUBUNIT PROTEIN MS42"/>
    <property type="match status" value="1"/>
</dbReference>
<dbReference type="Pfam" id="PF02777">
    <property type="entry name" value="Sod_Fe_C"/>
    <property type="match status" value="1"/>
</dbReference>
<dbReference type="Pfam" id="PF00081">
    <property type="entry name" value="Sod_Fe_N"/>
    <property type="match status" value="1"/>
</dbReference>
<dbReference type="PIRSF" id="PIRSF000349">
    <property type="entry name" value="SODismutase"/>
    <property type="match status" value="1"/>
</dbReference>
<dbReference type="PRINTS" id="PR01703">
    <property type="entry name" value="MNSODISMTASE"/>
</dbReference>
<dbReference type="SUPFAM" id="SSF54719">
    <property type="entry name" value="Fe,Mn superoxide dismutase (SOD), C-terminal domain"/>
    <property type="match status" value="1"/>
</dbReference>
<dbReference type="SUPFAM" id="SSF46609">
    <property type="entry name" value="Fe,Mn superoxide dismutase (SOD), N-terminal domain"/>
    <property type="match status" value="1"/>
</dbReference>
<dbReference type="PROSITE" id="PS00088">
    <property type="entry name" value="SOD_MN"/>
    <property type="match status" value="1"/>
</dbReference>
<name>SODM_SALTI</name>
<protein>
    <recommendedName>
        <fullName>Superoxide dismutase [Mn]</fullName>
        <ecNumber>1.15.1.1</ecNumber>
    </recommendedName>
    <alternativeName>
        <fullName>MnSOD</fullName>
    </alternativeName>
</protein>
<evidence type="ECO:0000250" key="1"/>
<evidence type="ECO:0000305" key="2"/>